<name>NU2M_CARAU</name>
<keyword id="KW-0249">Electron transport</keyword>
<keyword id="KW-0472">Membrane</keyword>
<keyword id="KW-0496">Mitochondrion</keyword>
<keyword id="KW-0999">Mitochondrion inner membrane</keyword>
<keyword id="KW-0520">NAD</keyword>
<keyword id="KW-1185">Reference proteome</keyword>
<keyword id="KW-0679">Respiratory chain</keyword>
<keyword id="KW-1278">Translocase</keyword>
<keyword id="KW-0812">Transmembrane</keyword>
<keyword id="KW-1133">Transmembrane helix</keyword>
<keyword id="KW-0813">Transport</keyword>
<keyword id="KW-0830">Ubiquinone</keyword>
<gene>
    <name type="primary">MT-ND2</name>
    <name type="synonym">MTND2</name>
    <name type="synonym">NADH2</name>
    <name type="synonym">ND2</name>
</gene>
<geneLocation type="mitochondrion"/>
<dbReference type="EC" id="7.1.1.2"/>
<dbReference type="EMBL" id="AB006953">
    <property type="protein sequence ID" value="BAA31239.1"/>
    <property type="molecule type" value="Genomic_DNA"/>
</dbReference>
<dbReference type="RefSeq" id="NP_008589.1">
    <property type="nucleotide sequence ID" value="NC_002079.1"/>
</dbReference>
<dbReference type="SMR" id="O78680"/>
<dbReference type="GeneID" id="808429"/>
<dbReference type="CTD" id="4536"/>
<dbReference type="OrthoDB" id="4092844at2759"/>
<dbReference type="Proteomes" id="UP000515129">
    <property type="component" value="Mitochondrion MT"/>
</dbReference>
<dbReference type="GO" id="GO:0005743">
    <property type="term" value="C:mitochondrial inner membrane"/>
    <property type="evidence" value="ECO:0007669"/>
    <property type="project" value="UniProtKB-SubCell"/>
</dbReference>
<dbReference type="GO" id="GO:0008137">
    <property type="term" value="F:NADH dehydrogenase (ubiquinone) activity"/>
    <property type="evidence" value="ECO:0007669"/>
    <property type="project" value="UniProtKB-EC"/>
</dbReference>
<dbReference type="GO" id="GO:0006120">
    <property type="term" value="P:mitochondrial electron transport, NADH to ubiquinone"/>
    <property type="evidence" value="ECO:0007669"/>
    <property type="project" value="InterPro"/>
</dbReference>
<dbReference type="InterPro" id="IPR050175">
    <property type="entry name" value="Complex_I_Subunit_2"/>
</dbReference>
<dbReference type="InterPro" id="IPR010933">
    <property type="entry name" value="NADH_DH_su2_C"/>
</dbReference>
<dbReference type="InterPro" id="IPR003917">
    <property type="entry name" value="NADH_UbQ_OxRdtase_chain2"/>
</dbReference>
<dbReference type="InterPro" id="IPR001750">
    <property type="entry name" value="ND/Mrp_TM"/>
</dbReference>
<dbReference type="PANTHER" id="PTHR46552">
    <property type="entry name" value="NADH-UBIQUINONE OXIDOREDUCTASE CHAIN 2"/>
    <property type="match status" value="1"/>
</dbReference>
<dbReference type="PANTHER" id="PTHR46552:SF1">
    <property type="entry name" value="NADH-UBIQUINONE OXIDOREDUCTASE CHAIN 2"/>
    <property type="match status" value="1"/>
</dbReference>
<dbReference type="Pfam" id="PF06444">
    <property type="entry name" value="NADH_dehy_S2_C"/>
    <property type="match status" value="1"/>
</dbReference>
<dbReference type="Pfam" id="PF00361">
    <property type="entry name" value="Proton_antipo_M"/>
    <property type="match status" value="1"/>
</dbReference>
<dbReference type="PRINTS" id="PR01436">
    <property type="entry name" value="NADHDHGNASE2"/>
</dbReference>
<accession>O78680</accession>
<evidence type="ECO:0000250" key="1"/>
<evidence type="ECO:0000255" key="2"/>
<evidence type="ECO:0000305" key="3"/>
<protein>
    <recommendedName>
        <fullName>NADH-ubiquinone oxidoreductase chain 2</fullName>
        <ecNumber>7.1.1.2</ecNumber>
    </recommendedName>
    <alternativeName>
        <fullName>NADH dehydrogenase subunit 2</fullName>
    </alternativeName>
</protein>
<feature type="chain" id="PRO_0000117567" description="NADH-ubiquinone oxidoreductase chain 2">
    <location>
        <begin position="1"/>
        <end position="348"/>
    </location>
</feature>
<feature type="transmembrane region" description="Helical" evidence="2">
    <location>
        <begin position="3"/>
        <end position="23"/>
    </location>
</feature>
<feature type="transmembrane region" description="Helical" evidence="2">
    <location>
        <begin position="60"/>
        <end position="80"/>
    </location>
</feature>
<feature type="transmembrane region" description="Helical" evidence="2">
    <location>
        <begin position="96"/>
        <end position="116"/>
    </location>
</feature>
<feature type="transmembrane region" description="Helical" evidence="2">
    <location>
        <begin position="149"/>
        <end position="169"/>
    </location>
</feature>
<feature type="transmembrane region" description="Helical" evidence="2">
    <location>
        <begin position="178"/>
        <end position="197"/>
    </location>
</feature>
<feature type="transmembrane region" description="Helical" evidence="2">
    <location>
        <begin position="202"/>
        <end position="219"/>
    </location>
</feature>
<feature type="transmembrane region" description="Helical" evidence="2">
    <location>
        <begin position="246"/>
        <end position="266"/>
    </location>
</feature>
<feature type="transmembrane region" description="Helical" evidence="2">
    <location>
        <begin position="274"/>
        <end position="294"/>
    </location>
</feature>
<feature type="transmembrane region" description="Helical" evidence="2">
    <location>
        <begin position="326"/>
        <end position="346"/>
    </location>
</feature>
<comment type="function">
    <text evidence="1">Core subunit of the mitochondrial membrane respiratory chain NADH dehydrogenase (Complex I) that is believed to belong to the minimal assembly required for catalysis. Complex I functions in the transfer of electrons from NADH to the respiratory chain. The immediate electron acceptor for the enzyme is believed to be ubiquinone (By similarity).</text>
</comment>
<comment type="catalytic activity">
    <reaction>
        <text>a ubiquinone + NADH + 5 H(+)(in) = a ubiquinol + NAD(+) + 4 H(+)(out)</text>
        <dbReference type="Rhea" id="RHEA:29091"/>
        <dbReference type="Rhea" id="RHEA-COMP:9565"/>
        <dbReference type="Rhea" id="RHEA-COMP:9566"/>
        <dbReference type="ChEBI" id="CHEBI:15378"/>
        <dbReference type="ChEBI" id="CHEBI:16389"/>
        <dbReference type="ChEBI" id="CHEBI:17976"/>
        <dbReference type="ChEBI" id="CHEBI:57540"/>
        <dbReference type="ChEBI" id="CHEBI:57945"/>
        <dbReference type="EC" id="7.1.1.2"/>
    </reaction>
</comment>
<comment type="subcellular location">
    <subcellularLocation>
        <location>Mitochondrion inner membrane</location>
        <topology>Multi-pass membrane protein</topology>
    </subcellularLocation>
</comment>
<comment type="similarity">
    <text evidence="3">Belongs to the complex I subunit 2 family.</text>
</comment>
<sequence length="348" mass="37879">MNPYVLMILLSSLGLGTTLTFASSHWLLAWMGLEINTLAITPLMAQHHHPRAVEATTKYFLTQATAAAMILFASTTNAWMTGEWSITDLSDPLANTMFMTALALKIGLAPMHFWMPEVLQGLDLLTGLILSTWQKLAPFALIIQTAQNIDPLLLTLLGVTSTLVGGWGGLNQTQLRKILAYSSIAHMGWMIIVIQYAPQLTLLALGTYIIMTSAAFLTLKMSLTTKVSTLATTWSKSPILTATTALVLLSLGGLPPLTGFMPKWLILQELTKQDLPIIATTMALAALISLYFYLRLCYAMTLTISPNTTNSTTPWRTQTTQASMPLALFTMATLGLLPMTPAILTLTT</sequence>
<reference key="1">
    <citation type="journal article" date="1998" name="Zool. Sci.">
        <title>The complete sequence of mitochondrial genome from a gynogenetic triploid 'ginbuna' (Carassius auratus langsdorfi).</title>
        <authorList>
            <person name="Murakami M."/>
            <person name="Yamashita Y."/>
            <person name="Fujitani H."/>
        </authorList>
    </citation>
    <scope>NUCLEOTIDE SEQUENCE [GENOMIC DNA]</scope>
    <source>
        <strain>AZ3 / Langsdorfi</strain>
        <tissue>Oocyte</tissue>
    </source>
</reference>
<proteinExistence type="inferred from homology"/>
<organism>
    <name type="scientific">Carassius auratus</name>
    <name type="common">Goldfish</name>
    <dbReference type="NCBI Taxonomy" id="7957"/>
    <lineage>
        <taxon>Eukaryota</taxon>
        <taxon>Metazoa</taxon>
        <taxon>Chordata</taxon>
        <taxon>Craniata</taxon>
        <taxon>Vertebrata</taxon>
        <taxon>Euteleostomi</taxon>
        <taxon>Actinopterygii</taxon>
        <taxon>Neopterygii</taxon>
        <taxon>Teleostei</taxon>
        <taxon>Ostariophysi</taxon>
        <taxon>Cypriniformes</taxon>
        <taxon>Cyprinidae</taxon>
        <taxon>Cyprininae</taxon>
        <taxon>Carassius</taxon>
    </lineage>
</organism>